<proteinExistence type="inferred from homology"/>
<name>SURE_BEII9</name>
<accession>B2IJG0</accession>
<reference key="1">
    <citation type="journal article" date="2010" name="J. Bacteriol.">
        <title>Complete genome sequence of Beijerinckia indica subsp. indica.</title>
        <authorList>
            <person name="Tamas I."/>
            <person name="Dedysh S.N."/>
            <person name="Liesack W."/>
            <person name="Stott M.B."/>
            <person name="Alam M."/>
            <person name="Murrell J.C."/>
            <person name="Dunfield P.F."/>
        </authorList>
    </citation>
    <scope>NUCLEOTIDE SEQUENCE [LARGE SCALE GENOMIC DNA]</scope>
    <source>
        <strain>ATCC 9039 / DSM 1715 / NCIMB 8712</strain>
    </source>
</reference>
<evidence type="ECO:0000255" key="1">
    <source>
        <dbReference type="HAMAP-Rule" id="MF_00060"/>
    </source>
</evidence>
<organism>
    <name type="scientific">Beijerinckia indica subsp. indica (strain ATCC 9039 / DSM 1715 / NCIMB 8712)</name>
    <dbReference type="NCBI Taxonomy" id="395963"/>
    <lineage>
        <taxon>Bacteria</taxon>
        <taxon>Pseudomonadati</taxon>
        <taxon>Pseudomonadota</taxon>
        <taxon>Alphaproteobacteria</taxon>
        <taxon>Hyphomicrobiales</taxon>
        <taxon>Beijerinckiaceae</taxon>
        <taxon>Beijerinckia</taxon>
    </lineage>
</organism>
<gene>
    <name evidence="1" type="primary">surE</name>
    <name type="ordered locus">Bind_2701</name>
</gene>
<sequence length="263" mass="27877">MRILITNDDGINAPGLAVLERIASALSDDVFVVAPESDQSGVAHSLSLSDPLRLRKISDRRFAVKGTPTDCVIMGVRSILIEQKPDLVLSGVNCGQNLAEDVIYSGTVAGAMEGTILGIPSIALSQCYEAGTGGRSGIAWDCAEVHAPGIIKHLLETGIDPDVVINLNFPACPASEVTGLAVTAQGRRDATTIKIDPRQDGRGLPYYWIAFARDTRQPGVGTDLEAVAQKRIALTPLRIDLTDDPTMTRLAQSLPKTLPKVAG</sequence>
<protein>
    <recommendedName>
        <fullName evidence="1">5'-nucleotidase SurE</fullName>
        <ecNumber evidence="1">3.1.3.5</ecNumber>
    </recommendedName>
    <alternativeName>
        <fullName evidence="1">Nucleoside 5'-monophosphate phosphohydrolase</fullName>
    </alternativeName>
</protein>
<feature type="chain" id="PRO_1000091985" description="5'-nucleotidase SurE">
    <location>
        <begin position="1"/>
        <end position="263"/>
    </location>
</feature>
<feature type="binding site" evidence="1">
    <location>
        <position position="8"/>
    </location>
    <ligand>
        <name>a divalent metal cation</name>
        <dbReference type="ChEBI" id="CHEBI:60240"/>
    </ligand>
</feature>
<feature type="binding site" evidence="1">
    <location>
        <position position="9"/>
    </location>
    <ligand>
        <name>a divalent metal cation</name>
        <dbReference type="ChEBI" id="CHEBI:60240"/>
    </ligand>
</feature>
<feature type="binding site" evidence="1">
    <location>
        <position position="40"/>
    </location>
    <ligand>
        <name>a divalent metal cation</name>
        <dbReference type="ChEBI" id="CHEBI:60240"/>
    </ligand>
</feature>
<feature type="binding site" evidence="1">
    <location>
        <position position="93"/>
    </location>
    <ligand>
        <name>a divalent metal cation</name>
        <dbReference type="ChEBI" id="CHEBI:60240"/>
    </ligand>
</feature>
<comment type="function">
    <text evidence="1">Nucleotidase that shows phosphatase activity on nucleoside 5'-monophosphates.</text>
</comment>
<comment type="catalytic activity">
    <reaction evidence="1">
        <text>a ribonucleoside 5'-phosphate + H2O = a ribonucleoside + phosphate</text>
        <dbReference type="Rhea" id="RHEA:12484"/>
        <dbReference type="ChEBI" id="CHEBI:15377"/>
        <dbReference type="ChEBI" id="CHEBI:18254"/>
        <dbReference type="ChEBI" id="CHEBI:43474"/>
        <dbReference type="ChEBI" id="CHEBI:58043"/>
        <dbReference type="EC" id="3.1.3.5"/>
    </reaction>
</comment>
<comment type="cofactor">
    <cofactor evidence="1">
        <name>a divalent metal cation</name>
        <dbReference type="ChEBI" id="CHEBI:60240"/>
    </cofactor>
    <text evidence="1">Binds 1 divalent metal cation per subunit.</text>
</comment>
<comment type="subcellular location">
    <subcellularLocation>
        <location evidence="1">Cytoplasm</location>
    </subcellularLocation>
</comment>
<comment type="similarity">
    <text evidence="1">Belongs to the SurE nucleotidase family.</text>
</comment>
<dbReference type="EC" id="3.1.3.5" evidence="1"/>
<dbReference type="EMBL" id="CP001016">
    <property type="protein sequence ID" value="ACB96273.1"/>
    <property type="molecule type" value="Genomic_DNA"/>
</dbReference>
<dbReference type="RefSeq" id="WP_012385624.1">
    <property type="nucleotide sequence ID" value="NC_010581.1"/>
</dbReference>
<dbReference type="SMR" id="B2IJG0"/>
<dbReference type="STRING" id="395963.Bind_2701"/>
<dbReference type="KEGG" id="bid:Bind_2701"/>
<dbReference type="eggNOG" id="COG0496">
    <property type="taxonomic scope" value="Bacteria"/>
</dbReference>
<dbReference type="HOGENOM" id="CLU_045192_1_2_5"/>
<dbReference type="OrthoDB" id="9780815at2"/>
<dbReference type="Proteomes" id="UP000001695">
    <property type="component" value="Chromosome"/>
</dbReference>
<dbReference type="GO" id="GO:0005737">
    <property type="term" value="C:cytoplasm"/>
    <property type="evidence" value="ECO:0007669"/>
    <property type="project" value="UniProtKB-SubCell"/>
</dbReference>
<dbReference type="GO" id="GO:0008254">
    <property type="term" value="F:3'-nucleotidase activity"/>
    <property type="evidence" value="ECO:0007669"/>
    <property type="project" value="TreeGrafter"/>
</dbReference>
<dbReference type="GO" id="GO:0008253">
    <property type="term" value="F:5'-nucleotidase activity"/>
    <property type="evidence" value="ECO:0007669"/>
    <property type="project" value="UniProtKB-UniRule"/>
</dbReference>
<dbReference type="GO" id="GO:0004309">
    <property type="term" value="F:exopolyphosphatase activity"/>
    <property type="evidence" value="ECO:0007669"/>
    <property type="project" value="TreeGrafter"/>
</dbReference>
<dbReference type="GO" id="GO:0046872">
    <property type="term" value="F:metal ion binding"/>
    <property type="evidence" value="ECO:0007669"/>
    <property type="project" value="UniProtKB-UniRule"/>
</dbReference>
<dbReference type="GO" id="GO:0000166">
    <property type="term" value="F:nucleotide binding"/>
    <property type="evidence" value="ECO:0007669"/>
    <property type="project" value="UniProtKB-KW"/>
</dbReference>
<dbReference type="FunFam" id="3.40.1210.10:FF:000001">
    <property type="entry name" value="5'/3'-nucleotidase SurE"/>
    <property type="match status" value="1"/>
</dbReference>
<dbReference type="Gene3D" id="3.40.1210.10">
    <property type="entry name" value="Survival protein SurE-like phosphatase/nucleotidase"/>
    <property type="match status" value="1"/>
</dbReference>
<dbReference type="HAMAP" id="MF_00060">
    <property type="entry name" value="SurE"/>
    <property type="match status" value="1"/>
</dbReference>
<dbReference type="InterPro" id="IPR030048">
    <property type="entry name" value="SurE"/>
</dbReference>
<dbReference type="InterPro" id="IPR002828">
    <property type="entry name" value="SurE-like_Pase/nucleotidase"/>
</dbReference>
<dbReference type="InterPro" id="IPR036523">
    <property type="entry name" value="SurE-like_sf"/>
</dbReference>
<dbReference type="NCBIfam" id="NF001490">
    <property type="entry name" value="PRK00346.1-4"/>
    <property type="match status" value="1"/>
</dbReference>
<dbReference type="NCBIfam" id="TIGR00087">
    <property type="entry name" value="surE"/>
    <property type="match status" value="1"/>
</dbReference>
<dbReference type="PANTHER" id="PTHR30457">
    <property type="entry name" value="5'-NUCLEOTIDASE SURE"/>
    <property type="match status" value="1"/>
</dbReference>
<dbReference type="PANTHER" id="PTHR30457:SF12">
    <property type="entry name" value="5'_3'-NUCLEOTIDASE SURE"/>
    <property type="match status" value="1"/>
</dbReference>
<dbReference type="Pfam" id="PF01975">
    <property type="entry name" value="SurE"/>
    <property type="match status" value="1"/>
</dbReference>
<dbReference type="SUPFAM" id="SSF64167">
    <property type="entry name" value="SurE-like"/>
    <property type="match status" value="1"/>
</dbReference>
<keyword id="KW-0963">Cytoplasm</keyword>
<keyword id="KW-0378">Hydrolase</keyword>
<keyword id="KW-0479">Metal-binding</keyword>
<keyword id="KW-0547">Nucleotide-binding</keyword>
<keyword id="KW-1185">Reference proteome</keyword>